<evidence type="ECO:0000255" key="1">
    <source>
        <dbReference type="HAMAP-Rule" id="MF_00375"/>
    </source>
</evidence>
<proteinExistence type="inferred from homology"/>
<sequence>MNYSRSELLFQEAQKAIPGGVNSPVRAFKSVGTDPLFIEKASGSRIYDVDGNEFIDYVGSWGPMILGHCHPQVVAAVKSAVDNGCSFGAPTELEITLAEMVIEAVPSIEMVRMVSSGTEATMSAIRLARGYTGRDKILKFSGCYHGHSDSLLVKAGSGAATFGVPDSPGVPQDFAKHTLTATYNDLESVNKLVAENKNQISCIIVEPVAGNMGTVPPREGFLEGLRSLCTEEGIVLIFDEVMSGFRVAYGGAQELYNVTPDMTTLGKIIGGGLPVGAFGGKKEIMSLLSPSGGVYQAGTLSGNPLAMTAGIETLKLLQTEGFYQDLDRKSDYVASGIAKAAKDAGFPIYSTRVGSMFCAFFSKKPVYDWTSAAACDTKAFAKYFRLMLDEGIYLAPSQFETAFVSIAHSTDDLDKTIAAAAKAFKSL</sequence>
<feature type="chain" id="PRO_1000079924" description="Glutamate-1-semialdehyde 2,1-aminomutase">
    <location>
        <begin position="1"/>
        <end position="427"/>
    </location>
</feature>
<feature type="modified residue" description="N6-(pyridoxal phosphate)lysine" evidence="1">
    <location>
        <position position="267"/>
    </location>
</feature>
<keyword id="KW-0963">Cytoplasm</keyword>
<keyword id="KW-0413">Isomerase</keyword>
<keyword id="KW-0627">Porphyrin biosynthesis</keyword>
<keyword id="KW-0663">Pyridoxal phosphate</keyword>
<keyword id="KW-1185">Reference proteome</keyword>
<gene>
    <name evidence="1" type="primary">hemL</name>
    <name type="ordered locus">Gura_4245</name>
</gene>
<dbReference type="EC" id="5.4.3.8" evidence="1"/>
<dbReference type="EMBL" id="CP000698">
    <property type="protein sequence ID" value="ABQ28388.1"/>
    <property type="molecule type" value="Genomic_DNA"/>
</dbReference>
<dbReference type="RefSeq" id="WP_011941019.1">
    <property type="nucleotide sequence ID" value="NC_009483.1"/>
</dbReference>
<dbReference type="SMR" id="A5G9C0"/>
<dbReference type="STRING" id="351605.Gura_4245"/>
<dbReference type="KEGG" id="gur:Gura_4245"/>
<dbReference type="HOGENOM" id="CLU_016922_1_5_7"/>
<dbReference type="OrthoDB" id="9801052at2"/>
<dbReference type="UniPathway" id="UPA00251">
    <property type="reaction ID" value="UER00317"/>
</dbReference>
<dbReference type="Proteomes" id="UP000006695">
    <property type="component" value="Chromosome"/>
</dbReference>
<dbReference type="GO" id="GO:0005737">
    <property type="term" value="C:cytoplasm"/>
    <property type="evidence" value="ECO:0007669"/>
    <property type="project" value="UniProtKB-SubCell"/>
</dbReference>
<dbReference type="GO" id="GO:0042286">
    <property type="term" value="F:glutamate-1-semialdehyde 2,1-aminomutase activity"/>
    <property type="evidence" value="ECO:0007669"/>
    <property type="project" value="UniProtKB-UniRule"/>
</dbReference>
<dbReference type="GO" id="GO:0030170">
    <property type="term" value="F:pyridoxal phosphate binding"/>
    <property type="evidence" value="ECO:0007669"/>
    <property type="project" value="InterPro"/>
</dbReference>
<dbReference type="GO" id="GO:0008483">
    <property type="term" value="F:transaminase activity"/>
    <property type="evidence" value="ECO:0007669"/>
    <property type="project" value="InterPro"/>
</dbReference>
<dbReference type="GO" id="GO:0006782">
    <property type="term" value="P:protoporphyrinogen IX biosynthetic process"/>
    <property type="evidence" value="ECO:0007669"/>
    <property type="project" value="UniProtKB-UniRule"/>
</dbReference>
<dbReference type="CDD" id="cd00610">
    <property type="entry name" value="OAT_like"/>
    <property type="match status" value="1"/>
</dbReference>
<dbReference type="FunFam" id="3.40.640.10:FF:000021">
    <property type="entry name" value="Glutamate-1-semialdehyde 2,1-aminomutase"/>
    <property type="match status" value="1"/>
</dbReference>
<dbReference type="Gene3D" id="3.90.1150.10">
    <property type="entry name" value="Aspartate Aminotransferase, domain 1"/>
    <property type="match status" value="1"/>
</dbReference>
<dbReference type="Gene3D" id="3.40.640.10">
    <property type="entry name" value="Type I PLP-dependent aspartate aminotransferase-like (Major domain)"/>
    <property type="match status" value="1"/>
</dbReference>
<dbReference type="HAMAP" id="MF_00375">
    <property type="entry name" value="HemL_aminotrans_3"/>
    <property type="match status" value="1"/>
</dbReference>
<dbReference type="InterPro" id="IPR004639">
    <property type="entry name" value="4pyrrol_synth_GluAld_NH2Trfase"/>
</dbReference>
<dbReference type="InterPro" id="IPR005814">
    <property type="entry name" value="Aminotrans_3"/>
</dbReference>
<dbReference type="InterPro" id="IPR049704">
    <property type="entry name" value="Aminotrans_3_PPA_site"/>
</dbReference>
<dbReference type="InterPro" id="IPR015424">
    <property type="entry name" value="PyrdxlP-dep_Trfase"/>
</dbReference>
<dbReference type="InterPro" id="IPR015421">
    <property type="entry name" value="PyrdxlP-dep_Trfase_major"/>
</dbReference>
<dbReference type="InterPro" id="IPR015422">
    <property type="entry name" value="PyrdxlP-dep_Trfase_small"/>
</dbReference>
<dbReference type="NCBIfam" id="TIGR00713">
    <property type="entry name" value="hemL"/>
    <property type="match status" value="1"/>
</dbReference>
<dbReference type="NCBIfam" id="NF000818">
    <property type="entry name" value="PRK00062.1"/>
    <property type="match status" value="1"/>
</dbReference>
<dbReference type="PANTHER" id="PTHR43713">
    <property type="entry name" value="GLUTAMATE-1-SEMIALDEHYDE 2,1-AMINOMUTASE"/>
    <property type="match status" value="1"/>
</dbReference>
<dbReference type="PANTHER" id="PTHR43713:SF3">
    <property type="entry name" value="GLUTAMATE-1-SEMIALDEHYDE 2,1-AMINOMUTASE 1, CHLOROPLASTIC-RELATED"/>
    <property type="match status" value="1"/>
</dbReference>
<dbReference type="Pfam" id="PF00202">
    <property type="entry name" value="Aminotran_3"/>
    <property type="match status" value="1"/>
</dbReference>
<dbReference type="SUPFAM" id="SSF53383">
    <property type="entry name" value="PLP-dependent transferases"/>
    <property type="match status" value="1"/>
</dbReference>
<dbReference type="PROSITE" id="PS00600">
    <property type="entry name" value="AA_TRANSFER_CLASS_3"/>
    <property type="match status" value="1"/>
</dbReference>
<accession>A5G9C0</accession>
<comment type="catalytic activity">
    <reaction evidence="1">
        <text>(S)-4-amino-5-oxopentanoate = 5-aminolevulinate</text>
        <dbReference type="Rhea" id="RHEA:14265"/>
        <dbReference type="ChEBI" id="CHEBI:57501"/>
        <dbReference type="ChEBI" id="CHEBI:356416"/>
        <dbReference type="EC" id="5.4.3.8"/>
    </reaction>
</comment>
<comment type="cofactor">
    <cofactor evidence="1">
        <name>pyridoxal 5'-phosphate</name>
        <dbReference type="ChEBI" id="CHEBI:597326"/>
    </cofactor>
</comment>
<comment type="pathway">
    <text evidence="1">Porphyrin-containing compound metabolism; protoporphyrin-IX biosynthesis; 5-aminolevulinate from L-glutamyl-tRNA(Glu): step 2/2.</text>
</comment>
<comment type="subunit">
    <text evidence="1">Homodimer.</text>
</comment>
<comment type="subcellular location">
    <subcellularLocation>
        <location evidence="1">Cytoplasm</location>
    </subcellularLocation>
</comment>
<comment type="similarity">
    <text evidence="1">Belongs to the class-III pyridoxal-phosphate-dependent aminotransferase family. HemL subfamily.</text>
</comment>
<organism>
    <name type="scientific">Geotalea uraniireducens (strain Rf4)</name>
    <name type="common">Geobacter uraniireducens</name>
    <dbReference type="NCBI Taxonomy" id="351605"/>
    <lineage>
        <taxon>Bacteria</taxon>
        <taxon>Pseudomonadati</taxon>
        <taxon>Thermodesulfobacteriota</taxon>
        <taxon>Desulfuromonadia</taxon>
        <taxon>Geobacterales</taxon>
        <taxon>Geobacteraceae</taxon>
        <taxon>Geotalea</taxon>
    </lineage>
</organism>
<reference key="1">
    <citation type="submission" date="2007-05" db="EMBL/GenBank/DDBJ databases">
        <title>Complete sequence of Geobacter uraniireducens Rf4.</title>
        <authorList>
            <consortium name="US DOE Joint Genome Institute"/>
            <person name="Copeland A."/>
            <person name="Lucas S."/>
            <person name="Lapidus A."/>
            <person name="Barry K."/>
            <person name="Detter J.C."/>
            <person name="Glavina del Rio T."/>
            <person name="Hammon N."/>
            <person name="Israni S."/>
            <person name="Dalin E."/>
            <person name="Tice H."/>
            <person name="Pitluck S."/>
            <person name="Chertkov O."/>
            <person name="Brettin T."/>
            <person name="Bruce D."/>
            <person name="Han C."/>
            <person name="Schmutz J."/>
            <person name="Larimer F."/>
            <person name="Land M."/>
            <person name="Hauser L."/>
            <person name="Kyrpides N."/>
            <person name="Mikhailova N."/>
            <person name="Shelobolina E."/>
            <person name="Aklujkar M."/>
            <person name="Lovley D."/>
            <person name="Richardson P."/>
        </authorList>
    </citation>
    <scope>NUCLEOTIDE SEQUENCE [LARGE SCALE GENOMIC DNA]</scope>
    <source>
        <strain>ATCC BAA-1134 / JCM 13001 / Rf4</strain>
    </source>
</reference>
<name>GSA_GEOUR</name>
<protein>
    <recommendedName>
        <fullName evidence="1">Glutamate-1-semialdehyde 2,1-aminomutase</fullName>
        <shortName evidence="1">GSA</shortName>
        <ecNumber evidence="1">5.4.3.8</ecNumber>
    </recommendedName>
    <alternativeName>
        <fullName evidence="1">Glutamate-1-semialdehyde aminotransferase</fullName>
        <shortName evidence="1">GSA-AT</shortName>
    </alternativeName>
</protein>